<keyword id="KW-0687">Ribonucleoprotein</keyword>
<keyword id="KW-0689">Ribosomal protein</keyword>
<keyword id="KW-0694">RNA-binding</keyword>
<keyword id="KW-0699">rRNA-binding</keyword>
<organism>
    <name type="scientific">Acinetobacter baumannii (strain ATCC 17978 / DSM 105126 / CIP 53.77 / LMG 1025 / NCDC KC755 / 5377)</name>
    <dbReference type="NCBI Taxonomy" id="400667"/>
    <lineage>
        <taxon>Bacteria</taxon>
        <taxon>Pseudomonadati</taxon>
        <taxon>Pseudomonadota</taxon>
        <taxon>Gammaproteobacteria</taxon>
        <taxon>Moraxellales</taxon>
        <taxon>Moraxellaceae</taxon>
        <taxon>Acinetobacter</taxon>
        <taxon>Acinetobacter calcoaceticus/baumannii complex</taxon>
    </lineage>
</organism>
<proteinExistence type="inferred from homology"/>
<evidence type="ECO:0000255" key="1">
    <source>
        <dbReference type="HAMAP-Rule" id="MF_01306"/>
    </source>
</evidence>
<evidence type="ECO:0000256" key="2">
    <source>
        <dbReference type="SAM" id="MobiDB-lite"/>
    </source>
</evidence>
<evidence type="ECO:0000305" key="3"/>
<protein>
    <recommendedName>
        <fullName evidence="1">Small ribosomal subunit protein uS4</fullName>
    </recommendedName>
    <alternativeName>
        <fullName evidence="3">30S ribosomal protein S4</fullName>
    </alternativeName>
</protein>
<gene>
    <name evidence="1" type="primary">rpsD</name>
    <name type="ordered locus">A1S_3057</name>
</gene>
<dbReference type="EMBL" id="CP000521">
    <property type="protein sequence ID" value="ABO13454.2"/>
    <property type="molecule type" value="Genomic_DNA"/>
</dbReference>
<dbReference type="RefSeq" id="WP_000135204.1">
    <property type="nucleotide sequence ID" value="NZ_CP053098.1"/>
</dbReference>
<dbReference type="SMR" id="A3M960"/>
<dbReference type="GeneID" id="92895293"/>
<dbReference type="KEGG" id="acb:A1S_3057"/>
<dbReference type="HOGENOM" id="CLU_092403_0_2_6"/>
<dbReference type="GO" id="GO:0015935">
    <property type="term" value="C:small ribosomal subunit"/>
    <property type="evidence" value="ECO:0007669"/>
    <property type="project" value="InterPro"/>
</dbReference>
<dbReference type="GO" id="GO:0019843">
    <property type="term" value="F:rRNA binding"/>
    <property type="evidence" value="ECO:0007669"/>
    <property type="project" value="UniProtKB-UniRule"/>
</dbReference>
<dbReference type="GO" id="GO:0003735">
    <property type="term" value="F:structural constituent of ribosome"/>
    <property type="evidence" value="ECO:0007669"/>
    <property type="project" value="InterPro"/>
</dbReference>
<dbReference type="GO" id="GO:0042274">
    <property type="term" value="P:ribosomal small subunit biogenesis"/>
    <property type="evidence" value="ECO:0007669"/>
    <property type="project" value="TreeGrafter"/>
</dbReference>
<dbReference type="GO" id="GO:0006412">
    <property type="term" value="P:translation"/>
    <property type="evidence" value="ECO:0007669"/>
    <property type="project" value="UniProtKB-UniRule"/>
</dbReference>
<dbReference type="CDD" id="cd00165">
    <property type="entry name" value="S4"/>
    <property type="match status" value="1"/>
</dbReference>
<dbReference type="FunFam" id="1.10.1050.10:FF:000001">
    <property type="entry name" value="30S ribosomal protein S4"/>
    <property type="match status" value="1"/>
</dbReference>
<dbReference type="FunFam" id="3.10.290.10:FF:000001">
    <property type="entry name" value="30S ribosomal protein S4"/>
    <property type="match status" value="1"/>
</dbReference>
<dbReference type="Gene3D" id="1.10.1050.10">
    <property type="entry name" value="Ribosomal Protein S4 Delta 41, Chain A, domain 1"/>
    <property type="match status" value="1"/>
</dbReference>
<dbReference type="Gene3D" id="3.10.290.10">
    <property type="entry name" value="RNA-binding S4 domain"/>
    <property type="match status" value="1"/>
</dbReference>
<dbReference type="HAMAP" id="MF_01306_B">
    <property type="entry name" value="Ribosomal_uS4_B"/>
    <property type="match status" value="1"/>
</dbReference>
<dbReference type="InterPro" id="IPR022801">
    <property type="entry name" value="Ribosomal_uS4"/>
</dbReference>
<dbReference type="InterPro" id="IPR005709">
    <property type="entry name" value="Ribosomal_uS4_bac-type"/>
</dbReference>
<dbReference type="InterPro" id="IPR018079">
    <property type="entry name" value="Ribosomal_uS4_CS"/>
</dbReference>
<dbReference type="InterPro" id="IPR001912">
    <property type="entry name" value="Ribosomal_uS4_N"/>
</dbReference>
<dbReference type="InterPro" id="IPR002942">
    <property type="entry name" value="S4_RNA-bd"/>
</dbReference>
<dbReference type="InterPro" id="IPR036986">
    <property type="entry name" value="S4_RNA-bd_sf"/>
</dbReference>
<dbReference type="NCBIfam" id="NF003717">
    <property type="entry name" value="PRK05327.1"/>
    <property type="match status" value="1"/>
</dbReference>
<dbReference type="NCBIfam" id="TIGR01017">
    <property type="entry name" value="rpsD_bact"/>
    <property type="match status" value="1"/>
</dbReference>
<dbReference type="PANTHER" id="PTHR11831">
    <property type="entry name" value="30S 40S RIBOSOMAL PROTEIN"/>
    <property type="match status" value="1"/>
</dbReference>
<dbReference type="PANTHER" id="PTHR11831:SF4">
    <property type="entry name" value="SMALL RIBOSOMAL SUBUNIT PROTEIN US4M"/>
    <property type="match status" value="1"/>
</dbReference>
<dbReference type="Pfam" id="PF00163">
    <property type="entry name" value="Ribosomal_S4"/>
    <property type="match status" value="1"/>
</dbReference>
<dbReference type="Pfam" id="PF01479">
    <property type="entry name" value="S4"/>
    <property type="match status" value="1"/>
</dbReference>
<dbReference type="SMART" id="SM01390">
    <property type="entry name" value="Ribosomal_S4"/>
    <property type="match status" value="1"/>
</dbReference>
<dbReference type="SMART" id="SM00363">
    <property type="entry name" value="S4"/>
    <property type="match status" value="1"/>
</dbReference>
<dbReference type="SUPFAM" id="SSF55174">
    <property type="entry name" value="Alpha-L RNA-binding motif"/>
    <property type="match status" value="1"/>
</dbReference>
<dbReference type="PROSITE" id="PS00632">
    <property type="entry name" value="RIBOSOMAL_S4"/>
    <property type="match status" value="1"/>
</dbReference>
<dbReference type="PROSITE" id="PS50889">
    <property type="entry name" value="S4"/>
    <property type="match status" value="1"/>
</dbReference>
<reference key="1">
    <citation type="journal article" date="2007" name="Genes Dev.">
        <title>New insights into Acinetobacter baumannii pathogenesis revealed by high-density pyrosequencing and transposon mutagenesis.</title>
        <authorList>
            <person name="Smith M.G."/>
            <person name="Gianoulis T.A."/>
            <person name="Pukatzki S."/>
            <person name="Mekalanos J.J."/>
            <person name="Ornston L.N."/>
            <person name="Gerstein M."/>
            <person name="Snyder M."/>
        </authorList>
    </citation>
    <scope>NUCLEOTIDE SEQUENCE [LARGE SCALE GENOMIC DNA]</scope>
    <source>
        <strain>ATCC 17978 / DSM 105126 / CIP 53.77 / LMG 1025 / NCDC KC755 / 5377</strain>
    </source>
</reference>
<name>RS4_ACIBT</name>
<comment type="function">
    <text evidence="1">One of the primary rRNA binding proteins, it binds directly to 16S rRNA where it nucleates assembly of the body of the 30S subunit.</text>
</comment>
<comment type="function">
    <text evidence="1">With S5 and S12 plays an important role in translational accuracy.</text>
</comment>
<comment type="subunit">
    <text evidence="1">Part of the 30S ribosomal subunit. Contacts protein S5. The interaction surface between S4 and S5 is involved in control of translational fidelity.</text>
</comment>
<comment type="similarity">
    <text evidence="1">Belongs to the universal ribosomal protein uS4 family.</text>
</comment>
<accession>A3M960</accession>
<sequence>MARYIGPKCKLSRREGTDLQLKSGVKPFDVKTKKANKAPGQHGQARGGKQSEYSLQLREKQKVRRIYGVLERQFSNYYKEAARVKGATGENLLKLLESRLDNVVYRMGFGSTRAEARQLVSHRSITLNGRRVNIASIQVKAGDVIAVHEGAKQQLRIKNAIELAAQRGIPAWIEVDHSKLEGTFKAAPDRSDLPAEINESLIVELYSK</sequence>
<feature type="chain" id="PRO_0000293228" description="Small ribosomal subunit protein uS4">
    <location>
        <begin position="1"/>
        <end position="208"/>
    </location>
</feature>
<feature type="domain" description="S4 RNA-binding" evidence="1">
    <location>
        <begin position="98"/>
        <end position="160"/>
    </location>
</feature>
<feature type="region of interest" description="Disordered" evidence="2">
    <location>
        <begin position="24"/>
        <end position="52"/>
    </location>
</feature>